<organism>
    <name type="scientific">Homo sapiens</name>
    <name type="common">Human</name>
    <dbReference type="NCBI Taxonomy" id="9606"/>
    <lineage>
        <taxon>Eukaryota</taxon>
        <taxon>Metazoa</taxon>
        <taxon>Chordata</taxon>
        <taxon>Craniata</taxon>
        <taxon>Vertebrata</taxon>
        <taxon>Euteleostomi</taxon>
        <taxon>Mammalia</taxon>
        <taxon>Eutheria</taxon>
        <taxon>Euarchontoglires</taxon>
        <taxon>Primates</taxon>
        <taxon>Haplorrhini</taxon>
        <taxon>Catarrhini</taxon>
        <taxon>Hominidae</taxon>
        <taxon>Homo</taxon>
    </lineage>
</organism>
<gene>
    <name evidence="5" type="primary">TMEM263</name>
    <name type="synonym">C12orf23</name>
</gene>
<accession>Q8WUH6</accession>
<accession>B3KMN9</accession>
<feature type="chain" id="PRO_0000263629" description="Transmembrane protein 263">
    <location>
        <begin position="1"/>
        <end position="116"/>
    </location>
</feature>
<feature type="transmembrane region" description="Helical" evidence="1">
    <location>
        <begin position="40"/>
        <end position="60"/>
    </location>
</feature>
<feature type="transmembrane region" description="Helical" evidence="1">
    <location>
        <begin position="78"/>
        <end position="98"/>
    </location>
</feature>
<feature type="region of interest" description="Disordered" evidence="2">
    <location>
        <begin position="1"/>
        <end position="35"/>
    </location>
</feature>
<feature type="compositionally biased region" description="Polar residues" evidence="2">
    <location>
        <begin position="1"/>
        <end position="11"/>
    </location>
</feature>
<feature type="glycosylation site" description="N-linked (GlcNAc...) asparagine" evidence="1">
    <location>
        <position position="2"/>
    </location>
</feature>
<keyword id="KW-0325">Glycoprotein</keyword>
<keyword id="KW-0472">Membrane</keyword>
<keyword id="KW-1267">Proteomics identification</keyword>
<keyword id="KW-1185">Reference proteome</keyword>
<keyword id="KW-0812">Transmembrane</keyword>
<keyword id="KW-1133">Transmembrane helix</keyword>
<proteinExistence type="evidence at protein level"/>
<evidence type="ECO:0000255" key="1"/>
<evidence type="ECO:0000256" key="2">
    <source>
        <dbReference type="SAM" id="MobiDB-lite"/>
    </source>
</evidence>
<evidence type="ECO:0000269" key="3">
    <source>
    </source>
</evidence>
<evidence type="ECO:0000305" key="4"/>
<evidence type="ECO:0000312" key="5">
    <source>
        <dbReference type="HGNC" id="HGNC:28281"/>
    </source>
</evidence>
<dbReference type="EMBL" id="AK021783">
    <property type="protein sequence ID" value="BAG51051.1"/>
    <property type="molecule type" value="mRNA"/>
</dbReference>
<dbReference type="EMBL" id="AK022770">
    <property type="protein sequence ID" value="BAG51112.1"/>
    <property type="molecule type" value="mRNA"/>
</dbReference>
<dbReference type="EMBL" id="AK024021">
    <property type="protein sequence ID" value="BAG51252.1"/>
    <property type="molecule type" value="mRNA"/>
</dbReference>
<dbReference type="EMBL" id="CH471054">
    <property type="protein sequence ID" value="EAW97790.1"/>
    <property type="molecule type" value="Genomic_DNA"/>
</dbReference>
<dbReference type="EMBL" id="BC020522">
    <property type="protein sequence ID" value="AAH20522.1"/>
    <property type="molecule type" value="mRNA"/>
</dbReference>
<dbReference type="CCDS" id="CCDS9110.1"/>
<dbReference type="RefSeq" id="NP_001306590.1">
    <property type="nucleotide sequence ID" value="NM_001319661.2"/>
</dbReference>
<dbReference type="RefSeq" id="NP_001306591.1">
    <property type="nucleotide sequence ID" value="NM_001319662.2"/>
</dbReference>
<dbReference type="RefSeq" id="NP_001306592.1">
    <property type="nucleotide sequence ID" value="NM_001319663.2"/>
</dbReference>
<dbReference type="RefSeq" id="NP_001306593.1">
    <property type="nucleotide sequence ID" value="NM_001319664.2"/>
</dbReference>
<dbReference type="RefSeq" id="NP_001306595.1">
    <property type="nucleotide sequence ID" value="NM_001319666.1"/>
</dbReference>
<dbReference type="RefSeq" id="NP_689474.1">
    <property type="nucleotide sequence ID" value="NM_152261.4"/>
</dbReference>
<dbReference type="BioGRID" id="124723">
    <property type="interactions" value="155"/>
</dbReference>
<dbReference type="FunCoup" id="Q8WUH6">
    <property type="interactions" value="1165"/>
</dbReference>
<dbReference type="IntAct" id="Q8WUH6">
    <property type="interactions" value="60"/>
</dbReference>
<dbReference type="STRING" id="9606.ENSP00000449785"/>
<dbReference type="ChEMBL" id="CHEMBL4295908"/>
<dbReference type="TCDB" id="8.A.101.1.1">
    <property type="family name" value="the tmem263 (tmem263) family"/>
</dbReference>
<dbReference type="GlyCosmos" id="Q8WUH6">
    <property type="glycosylation" value="5 sites, 1 glycan"/>
</dbReference>
<dbReference type="GlyGen" id="Q8WUH6">
    <property type="glycosylation" value="9 sites, 1 N-linked glycan (1 site), 2 O-linked glycans (8 sites)"/>
</dbReference>
<dbReference type="iPTMnet" id="Q8WUH6"/>
<dbReference type="PhosphoSitePlus" id="Q8WUH6"/>
<dbReference type="SwissPalm" id="Q8WUH6"/>
<dbReference type="BioMuta" id="TMEM263"/>
<dbReference type="DMDM" id="74730713"/>
<dbReference type="jPOST" id="Q8WUH6"/>
<dbReference type="MassIVE" id="Q8WUH6"/>
<dbReference type="PaxDb" id="9606-ENSP00000280756"/>
<dbReference type="PeptideAtlas" id="Q8WUH6"/>
<dbReference type="ProteomicsDB" id="74677"/>
<dbReference type="Pumba" id="Q8WUH6"/>
<dbReference type="TopDownProteomics" id="Q8WUH6"/>
<dbReference type="Antibodypedia" id="48264">
    <property type="antibodies" value="49 antibodies from 10 providers"/>
</dbReference>
<dbReference type="DNASU" id="90488"/>
<dbReference type="Ensembl" id="ENST00000280756.9">
    <property type="protein sequence ID" value="ENSP00000280756.4"/>
    <property type="gene ID" value="ENSG00000151135.10"/>
</dbReference>
<dbReference type="Ensembl" id="ENST00000547081.1">
    <property type="protein sequence ID" value="ENSP00000449106.1"/>
    <property type="gene ID" value="ENSG00000151135.10"/>
</dbReference>
<dbReference type="Ensembl" id="ENST00000547242.5">
    <property type="protein sequence ID" value="ENSP00000446537.1"/>
    <property type="gene ID" value="ENSG00000151135.10"/>
</dbReference>
<dbReference type="Ensembl" id="ENST00000548125.5">
    <property type="protein sequence ID" value="ENSP00000449785.1"/>
    <property type="gene ID" value="ENSG00000151135.10"/>
</dbReference>
<dbReference type="Ensembl" id="ENST00000550344.5">
    <property type="protein sequence ID" value="ENSP00000446717.1"/>
    <property type="gene ID" value="ENSG00000151135.10"/>
</dbReference>
<dbReference type="Ensembl" id="ENST00000551813.1">
    <property type="protein sequence ID" value="ENSP00000450350.1"/>
    <property type="gene ID" value="ENSG00000151135.10"/>
</dbReference>
<dbReference type="GeneID" id="90488"/>
<dbReference type="KEGG" id="hsa:90488"/>
<dbReference type="MANE-Select" id="ENST00000280756.9">
    <property type="protein sequence ID" value="ENSP00000280756.4"/>
    <property type="RefSeq nucleotide sequence ID" value="NM_152261.4"/>
    <property type="RefSeq protein sequence ID" value="NP_689474.1"/>
</dbReference>
<dbReference type="UCSC" id="uc001tmb.4">
    <property type="organism name" value="human"/>
</dbReference>
<dbReference type="AGR" id="HGNC:28281"/>
<dbReference type="CTD" id="90488"/>
<dbReference type="DisGeNET" id="90488"/>
<dbReference type="GeneCards" id="TMEM263"/>
<dbReference type="HGNC" id="HGNC:28281">
    <property type="gene designation" value="TMEM263"/>
</dbReference>
<dbReference type="HPA" id="ENSG00000151135">
    <property type="expression patterns" value="Low tissue specificity"/>
</dbReference>
<dbReference type="neXtProt" id="NX_Q8WUH6"/>
<dbReference type="OpenTargets" id="ENSG00000151135"/>
<dbReference type="PharmGKB" id="PA142672295"/>
<dbReference type="VEuPathDB" id="HostDB:ENSG00000151135"/>
<dbReference type="eggNOG" id="ENOG502S1YC">
    <property type="taxonomic scope" value="Eukaryota"/>
</dbReference>
<dbReference type="GeneTree" id="ENSGT00390000013899"/>
<dbReference type="HOGENOM" id="CLU_131259_1_0_1"/>
<dbReference type="InParanoid" id="Q8WUH6"/>
<dbReference type="OMA" id="NNKDHPE"/>
<dbReference type="OrthoDB" id="6140834at2759"/>
<dbReference type="PAN-GO" id="Q8WUH6">
    <property type="GO annotations" value="0 GO annotations based on evolutionary models"/>
</dbReference>
<dbReference type="PhylomeDB" id="Q8WUH6"/>
<dbReference type="TreeFam" id="TF333298"/>
<dbReference type="PathwayCommons" id="Q8WUH6"/>
<dbReference type="SignaLink" id="Q8WUH6"/>
<dbReference type="BioGRID-ORCS" id="90488">
    <property type="hits" value="8 hits in 1152 CRISPR screens"/>
</dbReference>
<dbReference type="ChiTaRS" id="TMEM263">
    <property type="organism name" value="human"/>
</dbReference>
<dbReference type="GenomeRNAi" id="90488"/>
<dbReference type="Pharos" id="Q8WUH6">
    <property type="development level" value="Tdark"/>
</dbReference>
<dbReference type="PRO" id="PR:Q8WUH6"/>
<dbReference type="Proteomes" id="UP000005640">
    <property type="component" value="Chromosome 12"/>
</dbReference>
<dbReference type="RNAct" id="Q8WUH6">
    <property type="molecule type" value="protein"/>
</dbReference>
<dbReference type="Bgee" id="ENSG00000151135">
    <property type="expression patterns" value="Expressed in tibia and 195 other cell types or tissues"/>
</dbReference>
<dbReference type="ExpressionAtlas" id="Q8WUH6">
    <property type="expression patterns" value="baseline and differential"/>
</dbReference>
<dbReference type="GO" id="GO:0016020">
    <property type="term" value="C:membrane"/>
    <property type="evidence" value="ECO:0007669"/>
    <property type="project" value="UniProtKB-SubCell"/>
</dbReference>
<dbReference type="InterPro" id="IPR028153">
    <property type="entry name" value="UPF0444"/>
</dbReference>
<dbReference type="PANTHER" id="PTHR31443">
    <property type="match status" value="1"/>
</dbReference>
<dbReference type="Pfam" id="PF15475">
    <property type="entry name" value="UPF0444"/>
    <property type="match status" value="1"/>
</dbReference>
<reference key="1">
    <citation type="journal article" date="2004" name="Nat. Genet.">
        <title>Complete sequencing and characterization of 21,243 full-length human cDNAs.</title>
        <authorList>
            <person name="Ota T."/>
            <person name="Suzuki Y."/>
            <person name="Nishikawa T."/>
            <person name="Otsuki T."/>
            <person name="Sugiyama T."/>
            <person name="Irie R."/>
            <person name="Wakamatsu A."/>
            <person name="Hayashi K."/>
            <person name="Sato H."/>
            <person name="Nagai K."/>
            <person name="Kimura K."/>
            <person name="Makita H."/>
            <person name="Sekine M."/>
            <person name="Obayashi M."/>
            <person name="Nishi T."/>
            <person name="Shibahara T."/>
            <person name="Tanaka T."/>
            <person name="Ishii S."/>
            <person name="Yamamoto J."/>
            <person name="Saito K."/>
            <person name="Kawai Y."/>
            <person name="Isono Y."/>
            <person name="Nakamura Y."/>
            <person name="Nagahari K."/>
            <person name="Murakami K."/>
            <person name="Yasuda T."/>
            <person name="Iwayanagi T."/>
            <person name="Wagatsuma M."/>
            <person name="Shiratori A."/>
            <person name="Sudo H."/>
            <person name="Hosoiri T."/>
            <person name="Kaku Y."/>
            <person name="Kodaira H."/>
            <person name="Kondo H."/>
            <person name="Sugawara M."/>
            <person name="Takahashi M."/>
            <person name="Kanda K."/>
            <person name="Yokoi T."/>
            <person name="Furuya T."/>
            <person name="Kikkawa E."/>
            <person name="Omura Y."/>
            <person name="Abe K."/>
            <person name="Kamihara K."/>
            <person name="Katsuta N."/>
            <person name="Sato K."/>
            <person name="Tanikawa M."/>
            <person name="Yamazaki M."/>
            <person name="Ninomiya K."/>
            <person name="Ishibashi T."/>
            <person name="Yamashita H."/>
            <person name="Murakawa K."/>
            <person name="Fujimori K."/>
            <person name="Tanai H."/>
            <person name="Kimata M."/>
            <person name="Watanabe M."/>
            <person name="Hiraoka S."/>
            <person name="Chiba Y."/>
            <person name="Ishida S."/>
            <person name="Ono Y."/>
            <person name="Takiguchi S."/>
            <person name="Watanabe S."/>
            <person name="Yosida M."/>
            <person name="Hotuta T."/>
            <person name="Kusano J."/>
            <person name="Kanehori K."/>
            <person name="Takahashi-Fujii A."/>
            <person name="Hara H."/>
            <person name="Tanase T.-O."/>
            <person name="Nomura Y."/>
            <person name="Togiya S."/>
            <person name="Komai F."/>
            <person name="Hara R."/>
            <person name="Takeuchi K."/>
            <person name="Arita M."/>
            <person name="Imose N."/>
            <person name="Musashino K."/>
            <person name="Yuuki H."/>
            <person name="Oshima A."/>
            <person name="Sasaki N."/>
            <person name="Aotsuka S."/>
            <person name="Yoshikawa Y."/>
            <person name="Matsunawa H."/>
            <person name="Ichihara T."/>
            <person name="Shiohata N."/>
            <person name="Sano S."/>
            <person name="Moriya S."/>
            <person name="Momiyama H."/>
            <person name="Satoh N."/>
            <person name="Takami S."/>
            <person name="Terashima Y."/>
            <person name="Suzuki O."/>
            <person name="Nakagawa S."/>
            <person name="Senoh A."/>
            <person name="Mizoguchi H."/>
            <person name="Goto Y."/>
            <person name="Shimizu F."/>
            <person name="Wakebe H."/>
            <person name="Hishigaki H."/>
            <person name="Watanabe T."/>
            <person name="Sugiyama A."/>
            <person name="Takemoto M."/>
            <person name="Kawakami B."/>
            <person name="Yamazaki M."/>
            <person name="Watanabe K."/>
            <person name="Kumagai A."/>
            <person name="Itakura S."/>
            <person name="Fukuzumi Y."/>
            <person name="Fujimori Y."/>
            <person name="Komiyama M."/>
            <person name="Tashiro H."/>
            <person name="Tanigami A."/>
            <person name="Fujiwara T."/>
            <person name="Ono T."/>
            <person name="Yamada K."/>
            <person name="Fujii Y."/>
            <person name="Ozaki K."/>
            <person name="Hirao M."/>
            <person name="Ohmori Y."/>
            <person name="Kawabata A."/>
            <person name="Hikiji T."/>
            <person name="Kobatake N."/>
            <person name="Inagaki H."/>
            <person name="Ikema Y."/>
            <person name="Okamoto S."/>
            <person name="Okitani R."/>
            <person name="Kawakami T."/>
            <person name="Noguchi S."/>
            <person name="Itoh T."/>
            <person name="Shigeta K."/>
            <person name="Senba T."/>
            <person name="Matsumura K."/>
            <person name="Nakajima Y."/>
            <person name="Mizuno T."/>
            <person name="Morinaga M."/>
            <person name="Sasaki M."/>
            <person name="Togashi T."/>
            <person name="Oyama M."/>
            <person name="Hata H."/>
            <person name="Watanabe M."/>
            <person name="Komatsu T."/>
            <person name="Mizushima-Sugano J."/>
            <person name="Satoh T."/>
            <person name="Shirai Y."/>
            <person name="Takahashi Y."/>
            <person name="Nakagawa K."/>
            <person name="Okumura K."/>
            <person name="Nagase T."/>
            <person name="Nomura N."/>
            <person name="Kikuchi H."/>
            <person name="Masuho Y."/>
            <person name="Yamashita R."/>
            <person name="Nakai K."/>
            <person name="Yada T."/>
            <person name="Nakamura Y."/>
            <person name="Ohara O."/>
            <person name="Isogai T."/>
            <person name="Sugano S."/>
        </authorList>
    </citation>
    <scope>NUCLEOTIDE SEQUENCE [LARGE SCALE MRNA]</scope>
</reference>
<reference key="2">
    <citation type="submission" date="2005-07" db="EMBL/GenBank/DDBJ databases">
        <authorList>
            <person name="Mural R.J."/>
            <person name="Istrail S."/>
            <person name="Sutton G.G."/>
            <person name="Florea L."/>
            <person name="Halpern A.L."/>
            <person name="Mobarry C.M."/>
            <person name="Lippert R."/>
            <person name="Walenz B."/>
            <person name="Shatkay H."/>
            <person name="Dew I."/>
            <person name="Miller J.R."/>
            <person name="Flanigan M.J."/>
            <person name="Edwards N.J."/>
            <person name="Bolanos R."/>
            <person name="Fasulo D."/>
            <person name="Halldorsson B.V."/>
            <person name="Hannenhalli S."/>
            <person name="Turner R."/>
            <person name="Yooseph S."/>
            <person name="Lu F."/>
            <person name="Nusskern D.R."/>
            <person name="Shue B.C."/>
            <person name="Zheng X.H."/>
            <person name="Zhong F."/>
            <person name="Delcher A.L."/>
            <person name="Huson D.H."/>
            <person name="Kravitz S.A."/>
            <person name="Mouchard L."/>
            <person name="Reinert K."/>
            <person name="Remington K.A."/>
            <person name="Clark A.G."/>
            <person name="Waterman M.S."/>
            <person name="Eichler E.E."/>
            <person name="Adams M.D."/>
            <person name="Hunkapiller M.W."/>
            <person name="Myers E.W."/>
            <person name="Venter J.C."/>
        </authorList>
    </citation>
    <scope>NUCLEOTIDE SEQUENCE [LARGE SCALE GENOMIC DNA]</scope>
</reference>
<reference key="3">
    <citation type="journal article" date="2004" name="Genome Res.">
        <title>The status, quality, and expansion of the NIH full-length cDNA project: the Mammalian Gene Collection (MGC).</title>
        <authorList>
            <consortium name="The MGC Project Team"/>
        </authorList>
    </citation>
    <scope>NUCLEOTIDE SEQUENCE [LARGE SCALE MRNA]</scope>
    <source>
        <tissue>Skin</tissue>
    </source>
</reference>
<reference key="4">
    <citation type="journal article" date="2011" name="BMC Syst. Biol.">
        <title>Initial characterization of the human central proteome.</title>
        <authorList>
            <person name="Burkard T.R."/>
            <person name="Planyavsky M."/>
            <person name="Kaupe I."/>
            <person name="Breitwieser F.P."/>
            <person name="Buerckstuemmer T."/>
            <person name="Bennett K.L."/>
            <person name="Superti-Furga G."/>
            <person name="Colinge J."/>
        </authorList>
    </citation>
    <scope>IDENTIFICATION BY MASS SPECTROMETRY [LARGE SCALE ANALYSIS]</scope>
</reference>
<reference key="5">
    <citation type="journal article" date="2021" name="Hum. Genomics">
        <title>TMEM263: a novel candidate gene implicated in human autosomal recessive severe lethal skeletal dysplasia.</title>
        <authorList>
            <person name="Mohajeri M.S.A."/>
            <person name="Eslahi A."/>
            <person name="Khazaii Z."/>
            <person name="Moradi M.R."/>
            <person name="Pazhoomand R."/>
            <person name="Farrokhi S."/>
            <person name="Feizabadi M.H."/>
            <person name="Alizadeh F."/>
            <person name="Mojarrad M."/>
        </authorList>
    </citation>
    <scope>POSSIBLE INVOLVEMENT IN SKELETAL DYSPLASIA</scope>
    <scope>PUTATIVE FUNCTION</scope>
</reference>
<protein>
    <recommendedName>
        <fullName>Transmembrane protein 263</fullName>
    </recommendedName>
</protein>
<sequence length="116" mass="11748">MNQTDKNQQEIPSYLNDEPPEGSMKDHPQQQPGMLSRVTGGIFSVTKGAVGATIGGVAWIGGKSLEVTKTAVTTVPSMGIGLVKGGVSAVAGGVTAVGSAVVNKVPLTGKKKDKSD</sequence>
<name>TM263_HUMAN</name>
<comment type="function">
    <text evidence="3">May play a role in bone development.</text>
</comment>
<comment type="subcellular location">
    <subcellularLocation>
        <location evidence="4">Membrane</location>
        <topology evidence="1">Multi-pass membrane protein</topology>
    </subcellularLocation>
</comment>
<comment type="disease">
    <text evidence="3">Defect in TMEM263 has been found in a fetus with severe lethal skeletal dysplasia. The homozygous frameshift mutation found in this fetus results in the creation of a premature stop codon at Lys-68.</text>
</comment>
<comment type="similarity">
    <text evidence="4">Belongs to the TMEM263 family.</text>
</comment>